<organism>
    <name type="scientific">Bacillus subtilis (strain 168)</name>
    <dbReference type="NCBI Taxonomy" id="224308"/>
    <lineage>
        <taxon>Bacteria</taxon>
        <taxon>Bacillati</taxon>
        <taxon>Bacillota</taxon>
        <taxon>Bacilli</taxon>
        <taxon>Bacillales</taxon>
        <taxon>Bacillaceae</taxon>
        <taxon>Bacillus</taxon>
    </lineage>
</organism>
<protein>
    <recommendedName>
        <fullName>L-cystine uptake protein TcyP</fullName>
    </recommendedName>
    <alternativeName>
        <fullName>Symporter YhcL</fullName>
    </alternativeName>
    <alternativeName>
        <fullName>Transporter of cystine TcyP</fullName>
    </alternativeName>
</protein>
<reference key="1">
    <citation type="journal article" date="1996" name="Microbiology">
        <title>A 22 kb DNA sequence in the cspB-glpPFKD region at 75 degrees on the Bacillus subtilis chromosome.</title>
        <authorList>
            <person name="Noback M.A."/>
            <person name="Terpstra P."/>
            <person name="Holsappel S."/>
            <person name="Venema G."/>
            <person name="Bron S."/>
        </authorList>
    </citation>
    <scope>NUCLEOTIDE SEQUENCE [GENOMIC DNA]</scope>
    <source>
        <strain>168</strain>
    </source>
</reference>
<reference key="2">
    <citation type="journal article" date="1997" name="Nature">
        <title>The complete genome sequence of the Gram-positive bacterium Bacillus subtilis.</title>
        <authorList>
            <person name="Kunst F."/>
            <person name="Ogasawara N."/>
            <person name="Moszer I."/>
            <person name="Albertini A.M."/>
            <person name="Alloni G."/>
            <person name="Azevedo V."/>
            <person name="Bertero M.G."/>
            <person name="Bessieres P."/>
            <person name="Bolotin A."/>
            <person name="Borchert S."/>
            <person name="Borriss R."/>
            <person name="Boursier L."/>
            <person name="Brans A."/>
            <person name="Braun M."/>
            <person name="Brignell S.C."/>
            <person name="Bron S."/>
            <person name="Brouillet S."/>
            <person name="Bruschi C.V."/>
            <person name="Caldwell B."/>
            <person name="Capuano V."/>
            <person name="Carter N.M."/>
            <person name="Choi S.-K."/>
            <person name="Codani J.-J."/>
            <person name="Connerton I.F."/>
            <person name="Cummings N.J."/>
            <person name="Daniel R.A."/>
            <person name="Denizot F."/>
            <person name="Devine K.M."/>
            <person name="Duesterhoeft A."/>
            <person name="Ehrlich S.D."/>
            <person name="Emmerson P.T."/>
            <person name="Entian K.-D."/>
            <person name="Errington J."/>
            <person name="Fabret C."/>
            <person name="Ferrari E."/>
            <person name="Foulger D."/>
            <person name="Fritz C."/>
            <person name="Fujita M."/>
            <person name="Fujita Y."/>
            <person name="Fuma S."/>
            <person name="Galizzi A."/>
            <person name="Galleron N."/>
            <person name="Ghim S.-Y."/>
            <person name="Glaser P."/>
            <person name="Goffeau A."/>
            <person name="Golightly E.J."/>
            <person name="Grandi G."/>
            <person name="Guiseppi G."/>
            <person name="Guy B.J."/>
            <person name="Haga K."/>
            <person name="Haiech J."/>
            <person name="Harwood C.R."/>
            <person name="Henaut A."/>
            <person name="Hilbert H."/>
            <person name="Holsappel S."/>
            <person name="Hosono S."/>
            <person name="Hullo M.-F."/>
            <person name="Itaya M."/>
            <person name="Jones L.-M."/>
            <person name="Joris B."/>
            <person name="Karamata D."/>
            <person name="Kasahara Y."/>
            <person name="Klaerr-Blanchard M."/>
            <person name="Klein C."/>
            <person name="Kobayashi Y."/>
            <person name="Koetter P."/>
            <person name="Koningstein G."/>
            <person name="Krogh S."/>
            <person name="Kumano M."/>
            <person name="Kurita K."/>
            <person name="Lapidus A."/>
            <person name="Lardinois S."/>
            <person name="Lauber J."/>
            <person name="Lazarevic V."/>
            <person name="Lee S.-M."/>
            <person name="Levine A."/>
            <person name="Liu H."/>
            <person name="Masuda S."/>
            <person name="Mauel C."/>
            <person name="Medigue C."/>
            <person name="Medina N."/>
            <person name="Mellado R.P."/>
            <person name="Mizuno M."/>
            <person name="Moestl D."/>
            <person name="Nakai S."/>
            <person name="Noback M."/>
            <person name="Noone D."/>
            <person name="O'Reilly M."/>
            <person name="Ogawa K."/>
            <person name="Ogiwara A."/>
            <person name="Oudega B."/>
            <person name="Park S.-H."/>
            <person name="Parro V."/>
            <person name="Pohl T.M."/>
            <person name="Portetelle D."/>
            <person name="Porwollik S."/>
            <person name="Prescott A.M."/>
            <person name="Presecan E."/>
            <person name="Pujic P."/>
            <person name="Purnelle B."/>
            <person name="Rapoport G."/>
            <person name="Rey M."/>
            <person name="Reynolds S."/>
            <person name="Rieger M."/>
            <person name="Rivolta C."/>
            <person name="Rocha E."/>
            <person name="Roche B."/>
            <person name="Rose M."/>
            <person name="Sadaie Y."/>
            <person name="Sato T."/>
            <person name="Scanlan E."/>
            <person name="Schleich S."/>
            <person name="Schroeter R."/>
            <person name="Scoffone F."/>
            <person name="Sekiguchi J."/>
            <person name="Sekowska A."/>
            <person name="Seror S.J."/>
            <person name="Serror P."/>
            <person name="Shin B.-S."/>
            <person name="Soldo B."/>
            <person name="Sorokin A."/>
            <person name="Tacconi E."/>
            <person name="Takagi T."/>
            <person name="Takahashi H."/>
            <person name="Takemaru K."/>
            <person name="Takeuchi M."/>
            <person name="Tamakoshi A."/>
            <person name="Tanaka T."/>
            <person name="Terpstra P."/>
            <person name="Tognoni A."/>
            <person name="Tosato V."/>
            <person name="Uchiyama S."/>
            <person name="Vandenbol M."/>
            <person name="Vannier F."/>
            <person name="Vassarotti A."/>
            <person name="Viari A."/>
            <person name="Wambutt R."/>
            <person name="Wedler E."/>
            <person name="Wedler H."/>
            <person name="Weitzenegger T."/>
            <person name="Winters P."/>
            <person name="Wipat A."/>
            <person name="Yamamoto H."/>
            <person name="Yamane K."/>
            <person name="Yasumoto K."/>
            <person name="Yata K."/>
            <person name="Yoshida K."/>
            <person name="Yoshikawa H.-F."/>
            <person name="Zumstein E."/>
            <person name="Yoshikawa H."/>
            <person name="Danchin A."/>
        </authorList>
    </citation>
    <scope>NUCLEOTIDE SEQUENCE [LARGE SCALE GENOMIC DNA]</scope>
    <source>
        <strain>168</strain>
    </source>
</reference>
<reference key="3">
    <citation type="journal article" date="2002" name="J. Bacteriol.">
        <title>Global expression profile of Bacillus subtilis grown in the presence of sulfate or methionine.</title>
        <authorList>
            <person name="Auger S."/>
            <person name="Danchin A."/>
            <person name="Martin-Verstraete I."/>
        </authorList>
    </citation>
    <scope>INDUCTION</scope>
</reference>
<reference key="4">
    <citation type="journal article" date="2004" name="J. Bacteriol.">
        <title>Three different systems participate in L-cystine uptake in Bacillus subtilis.</title>
        <authorList>
            <person name="Burguiere P."/>
            <person name="Auger S."/>
            <person name="Hullo M.-F."/>
            <person name="Danchin A."/>
            <person name="Martin-Verstraete I."/>
        </authorList>
    </citation>
    <scope>FUNCTION</scope>
    <scope>BIOPHYSICOCHEMICAL PROPERTIES</scope>
    <source>
        <strain>168</strain>
    </source>
</reference>
<sequence length="463" mass="48982">METLLVVLHVFILFLLILGLFVMQKKHVSFSKRVFTALGLGIVFGFALQLIYGPTSNIVIQTADWFNIAGGGYVKLLQMVVMPLVFISILGAFTKLKLTKNLGKISGLIIGILVATTAVAAAVGIASALSFDLQAIQVDQGSTELSRGQELQQKSEDMTAKTLPQQIVELLPGNPFLDFTGARPTSTIAVVIFAAFLGVAFLGVKHKQPEQAETFKKLVDAVYAIVMRVVTLILRLTPYGVLAIMTKTIATSDLDSILKLGMFVIASYAALITMFIIHLLLLTFSGLNPVIYLKKAVPVLVFAFTSRSSAGALPLNIKTQRSMGVPEGIANFAGSFGLSIGQNGCAGIYPAMLAMMIAPTVGQNPFDPVFIITVIAVVAISSFGVAGVGGGATFAALLVLSSLNMPVALAGLLISIEPLIDMGRTALNVSGSMTSGLITSKVTKEIDQGAFHDQSRVIEAEEA</sequence>
<dbReference type="EMBL" id="X96983">
    <property type="protein sequence ID" value="CAA65696.1"/>
    <property type="molecule type" value="Genomic_DNA"/>
</dbReference>
<dbReference type="EMBL" id="AL009126">
    <property type="protein sequence ID" value="CAB12741.1"/>
    <property type="molecule type" value="Genomic_DNA"/>
</dbReference>
<dbReference type="PIR" id="H69822">
    <property type="entry name" value="H69822"/>
</dbReference>
<dbReference type="RefSeq" id="NP_388794.1">
    <property type="nucleotide sequence ID" value="NC_000964.3"/>
</dbReference>
<dbReference type="RefSeq" id="WP_003244685.1">
    <property type="nucleotide sequence ID" value="NZ_OZ025638.1"/>
</dbReference>
<dbReference type="SMR" id="P54596"/>
<dbReference type="FunCoup" id="P54596">
    <property type="interactions" value="51"/>
</dbReference>
<dbReference type="STRING" id="224308.BSU09130"/>
<dbReference type="TCDB" id="2.A.23.1.4">
    <property type="family name" value="the dicarboxylate/amino acid:cation (na(+) or h(+)) symporter (daacs) family"/>
</dbReference>
<dbReference type="PaxDb" id="224308-BSU09130"/>
<dbReference type="EnsemblBacteria" id="CAB12741">
    <property type="protein sequence ID" value="CAB12741"/>
    <property type="gene ID" value="BSU_09130"/>
</dbReference>
<dbReference type="GeneID" id="939257"/>
<dbReference type="KEGG" id="bsu:BSU09130"/>
<dbReference type="PATRIC" id="fig|224308.179.peg.987"/>
<dbReference type="eggNOG" id="COG1823">
    <property type="taxonomic scope" value="Bacteria"/>
</dbReference>
<dbReference type="InParanoid" id="P54596"/>
<dbReference type="OrthoDB" id="7778689at2"/>
<dbReference type="PhylomeDB" id="P54596"/>
<dbReference type="BioCyc" id="BSUB:BSU09130-MONOMER"/>
<dbReference type="SABIO-RK" id="P54596"/>
<dbReference type="Proteomes" id="UP000001570">
    <property type="component" value="Chromosome"/>
</dbReference>
<dbReference type="GO" id="GO:0005886">
    <property type="term" value="C:plasma membrane"/>
    <property type="evidence" value="ECO:0000318"/>
    <property type="project" value="GO_Central"/>
</dbReference>
<dbReference type="GO" id="GO:0015184">
    <property type="term" value="F:L-cystine transmembrane transporter activity"/>
    <property type="evidence" value="ECO:0000318"/>
    <property type="project" value="GO_Central"/>
</dbReference>
<dbReference type="GO" id="GO:0015293">
    <property type="term" value="F:symporter activity"/>
    <property type="evidence" value="ECO:0007669"/>
    <property type="project" value="InterPro"/>
</dbReference>
<dbReference type="FunFam" id="1.10.3860.10:FF:000004">
    <property type="entry name" value="L-cystine transporter tcyP"/>
    <property type="match status" value="1"/>
</dbReference>
<dbReference type="Gene3D" id="1.10.3860.10">
    <property type="entry name" value="Sodium:dicarboxylate symporter"/>
    <property type="match status" value="1"/>
</dbReference>
<dbReference type="InterPro" id="IPR001991">
    <property type="entry name" value="Na-dicarboxylate_symporter"/>
</dbReference>
<dbReference type="InterPro" id="IPR036458">
    <property type="entry name" value="Na:dicarbo_symporter_sf"/>
</dbReference>
<dbReference type="PANTHER" id="PTHR42865:SF5">
    <property type="entry name" value="L-CYSTINE TRANSPORTER TCYP"/>
    <property type="match status" value="1"/>
</dbReference>
<dbReference type="PANTHER" id="PTHR42865">
    <property type="entry name" value="PROTON/GLUTAMATE-ASPARTATE SYMPORTER"/>
    <property type="match status" value="1"/>
</dbReference>
<dbReference type="Pfam" id="PF00375">
    <property type="entry name" value="SDF"/>
    <property type="match status" value="1"/>
</dbReference>
<dbReference type="PRINTS" id="PR00173">
    <property type="entry name" value="EDTRNSPORT"/>
</dbReference>
<dbReference type="SUPFAM" id="SSF118215">
    <property type="entry name" value="Proton glutamate symport protein"/>
    <property type="match status" value="1"/>
</dbReference>
<proteinExistence type="evidence at protein level"/>
<gene>
    <name type="primary">tcyP</name>
    <name type="synonym">yhcL</name>
    <name type="ordered locus">BSU09130</name>
</gene>
<accession>P54596</accession>
<comment type="function">
    <text evidence="3">Mediates uptake of L-cystine, the oxidized form of L-cysteine. Although it is more specific for L-cystine, it could also transport a much broader range of amino acids and sulfur compounds including S-methylcysteine.</text>
</comment>
<comment type="biophysicochemical properties">
    <kinetics>
        <KM evidence="3">0.6 uM for L-cystine</KM>
        <Vmax evidence="3">1.9 nmol/min/mg enzyme for the wild-type</Vmax>
        <Vmax evidence="3">0.85 nmol/min/mg enzyme for tcyP deletion mutant</Vmax>
    </kinetics>
</comment>
<comment type="subcellular location">
    <subcellularLocation>
        <location evidence="4">Cell membrane</location>
        <topology evidence="4">Multi-pass membrane protein</topology>
    </subcellularLocation>
</comment>
<comment type="induction">
    <text evidence="2">More strongly expressed in the presence of methionine than in presence of sulfate. Strongly inhibited by seleno-DL-cystine.</text>
</comment>
<comment type="similarity">
    <text evidence="4">Belongs to the dicarboxylate/amino acid:cation symporter (DAACS) (TC 2.A.23) family.</text>
</comment>
<name>TCYP_BACSU</name>
<keyword id="KW-0029">Amino-acid transport</keyword>
<keyword id="KW-1003">Cell membrane</keyword>
<keyword id="KW-0472">Membrane</keyword>
<keyword id="KW-1185">Reference proteome</keyword>
<keyword id="KW-0812">Transmembrane</keyword>
<keyword id="KW-1133">Transmembrane helix</keyword>
<keyword id="KW-0813">Transport</keyword>
<feature type="chain" id="PRO_0000202123" description="L-cystine uptake protein TcyP">
    <location>
        <begin position="1"/>
        <end position="463"/>
    </location>
</feature>
<feature type="transmembrane region" description="Helical" evidence="1">
    <location>
        <begin position="3"/>
        <end position="23"/>
    </location>
</feature>
<feature type="transmembrane region" description="Helical" evidence="1">
    <location>
        <begin position="34"/>
        <end position="54"/>
    </location>
</feature>
<feature type="transmembrane region" description="Helical" evidence="1">
    <location>
        <begin position="73"/>
        <end position="93"/>
    </location>
</feature>
<feature type="transmembrane region" description="Helical" evidence="1">
    <location>
        <begin position="105"/>
        <end position="125"/>
    </location>
</feature>
<feature type="transmembrane region" description="Helical" evidence="1">
    <location>
        <begin position="184"/>
        <end position="204"/>
    </location>
</feature>
<feature type="transmembrane region" description="Helical" evidence="1">
    <location>
        <begin position="225"/>
        <end position="245"/>
    </location>
</feature>
<feature type="transmembrane region" description="Helical" evidence="1">
    <location>
        <begin position="262"/>
        <end position="282"/>
    </location>
</feature>
<feature type="transmembrane region" description="Helical" evidence="1">
    <location>
        <begin position="338"/>
        <end position="358"/>
    </location>
</feature>
<feature type="transmembrane region" description="Helical" evidence="1">
    <location>
        <begin position="369"/>
        <end position="389"/>
    </location>
</feature>
<feature type="transmembrane region" description="Helical" evidence="1">
    <location>
        <begin position="394"/>
        <end position="414"/>
    </location>
</feature>
<evidence type="ECO:0000255" key="1"/>
<evidence type="ECO:0000269" key="2">
    <source>
    </source>
</evidence>
<evidence type="ECO:0000269" key="3">
    <source>
    </source>
</evidence>
<evidence type="ECO:0000305" key="4"/>